<feature type="chain" id="PRO_0000352600" description="Protein GlcT">
    <location>
        <begin position="1"/>
        <end position="283"/>
    </location>
</feature>
<feature type="domain" description="PRD 1" evidence="1">
    <location>
        <begin position="69"/>
        <end position="173"/>
    </location>
</feature>
<feature type="domain" description="PRD 2" evidence="1">
    <location>
        <begin position="174"/>
        <end position="283"/>
    </location>
</feature>
<name>GLCT_STAA1</name>
<protein>
    <recommendedName>
        <fullName>Protein GlcT</fullName>
    </recommendedName>
</protein>
<comment type="similarity">
    <text evidence="2">Belongs to the transcriptional antiterminator BglG family. GlcT subfamily.</text>
</comment>
<organism>
    <name type="scientific">Staphylococcus aureus (strain Mu3 / ATCC 700698)</name>
    <dbReference type="NCBI Taxonomy" id="418127"/>
    <lineage>
        <taxon>Bacteria</taxon>
        <taxon>Bacillati</taxon>
        <taxon>Bacillota</taxon>
        <taxon>Bacilli</taxon>
        <taxon>Bacillales</taxon>
        <taxon>Staphylococcaceae</taxon>
        <taxon>Staphylococcus</taxon>
    </lineage>
</organism>
<evidence type="ECO:0000255" key="1">
    <source>
        <dbReference type="PROSITE-ProRule" id="PRU00704"/>
    </source>
</evidence>
<evidence type="ECO:0000305" key="2"/>
<proteinExistence type="inferred from homology"/>
<sequence>MGEYIVTKTLNNNVVVCTNNDQEVILIGKGIGFNKKEGMALNDQTITIEKIYKLESEQQKAHYKSLVEIADDNVLQVIIDSLNFISNTAMNVDSKQLVVSLTDHIIFAYKRLKQNQVISNPFVMETMQLYSDAYHIAKQVIDQLNAALDVHFPEDEIGFIALHIASNTEDLSMHEMTLINNVIKKGIDIIESDLVTTVDKESLQYQRFIRHVQFLIRRLRRKEYIHAQDDFVSMIKNHYPICYNTAYKILTMIQKQFDVNISESEIIYLTLHIHHFEERINQS</sequence>
<accession>A7X215</accession>
<gene>
    <name type="primary">glcT</name>
    <name type="ordered locus">SAHV_1345</name>
</gene>
<reference key="1">
    <citation type="journal article" date="2008" name="Antimicrob. Agents Chemother.">
        <title>Mutated response regulator graR is responsible for phenotypic conversion of Staphylococcus aureus from heterogeneous vancomycin-intermediate resistance to vancomycin-intermediate resistance.</title>
        <authorList>
            <person name="Neoh H.-M."/>
            <person name="Cui L."/>
            <person name="Yuzawa H."/>
            <person name="Takeuchi F."/>
            <person name="Matsuo M."/>
            <person name="Hiramatsu K."/>
        </authorList>
    </citation>
    <scope>NUCLEOTIDE SEQUENCE [LARGE SCALE GENOMIC DNA]</scope>
    <source>
        <strain>Mu3 / ATCC 700698</strain>
    </source>
</reference>
<dbReference type="EMBL" id="AP009324">
    <property type="protein sequence ID" value="BAF78228.1"/>
    <property type="molecule type" value="Genomic_DNA"/>
</dbReference>
<dbReference type="RefSeq" id="WP_000505015.1">
    <property type="nucleotide sequence ID" value="NZ_CTYB01000014.1"/>
</dbReference>
<dbReference type="SMR" id="A7X215"/>
<dbReference type="KEGG" id="saw:SAHV_1345"/>
<dbReference type="HOGENOM" id="CLU_078802_0_0_9"/>
<dbReference type="GO" id="GO:0003723">
    <property type="term" value="F:RNA binding"/>
    <property type="evidence" value="ECO:0007669"/>
    <property type="project" value="InterPro"/>
</dbReference>
<dbReference type="GO" id="GO:0045893">
    <property type="term" value="P:positive regulation of DNA-templated transcription"/>
    <property type="evidence" value="ECO:0007669"/>
    <property type="project" value="InterPro"/>
</dbReference>
<dbReference type="Gene3D" id="1.20.58.1950">
    <property type="match status" value="1"/>
</dbReference>
<dbReference type="Gene3D" id="1.20.890.100">
    <property type="match status" value="1"/>
</dbReference>
<dbReference type="Gene3D" id="2.30.24.10">
    <property type="entry name" value="CAT RNA-binding domain"/>
    <property type="match status" value="1"/>
</dbReference>
<dbReference type="Gene3D" id="1.10.1790.10">
    <property type="entry name" value="PRD domain"/>
    <property type="match status" value="1"/>
</dbReference>
<dbReference type="InterPro" id="IPR050661">
    <property type="entry name" value="BglG_antiterminators"/>
</dbReference>
<dbReference type="InterPro" id="IPR004341">
    <property type="entry name" value="CAT_RNA-bd_dom"/>
</dbReference>
<dbReference type="InterPro" id="IPR036650">
    <property type="entry name" value="CAT_RNA-bd_dom_sf"/>
</dbReference>
<dbReference type="InterPro" id="IPR011608">
    <property type="entry name" value="PRD"/>
</dbReference>
<dbReference type="InterPro" id="IPR036634">
    <property type="entry name" value="PRD_sf"/>
</dbReference>
<dbReference type="InterPro" id="IPR001550">
    <property type="entry name" value="Transcrpt_antitermin_CS"/>
</dbReference>
<dbReference type="NCBIfam" id="NF047357">
    <property type="entry name" value="antiterm_GlcT"/>
    <property type="match status" value="1"/>
</dbReference>
<dbReference type="PANTHER" id="PTHR30185">
    <property type="entry name" value="CRYPTIC BETA-GLUCOSIDE BGL OPERON ANTITERMINATOR"/>
    <property type="match status" value="1"/>
</dbReference>
<dbReference type="PANTHER" id="PTHR30185:SF16">
    <property type="entry name" value="PROTEIN GLCT"/>
    <property type="match status" value="1"/>
</dbReference>
<dbReference type="Pfam" id="PF03123">
    <property type="entry name" value="CAT_RBD"/>
    <property type="match status" value="1"/>
</dbReference>
<dbReference type="Pfam" id="PF00874">
    <property type="entry name" value="PRD"/>
    <property type="match status" value="2"/>
</dbReference>
<dbReference type="SMART" id="SM01061">
    <property type="entry name" value="CAT_RBD"/>
    <property type="match status" value="1"/>
</dbReference>
<dbReference type="SUPFAM" id="SSF63520">
    <property type="entry name" value="PTS-regulatory domain, PRD"/>
    <property type="match status" value="2"/>
</dbReference>
<dbReference type="SUPFAM" id="SSF50151">
    <property type="entry name" value="SacY-like RNA-binding domain"/>
    <property type="match status" value="1"/>
</dbReference>
<dbReference type="PROSITE" id="PS00654">
    <property type="entry name" value="PRD_1"/>
    <property type="match status" value="1"/>
</dbReference>
<dbReference type="PROSITE" id="PS51372">
    <property type="entry name" value="PRD_2"/>
    <property type="match status" value="2"/>
</dbReference>
<keyword id="KW-0677">Repeat</keyword>